<dbReference type="EMBL" id="AE010300">
    <property type="protein sequence ID" value="AAN48716.1"/>
    <property type="molecule type" value="Genomic_DNA"/>
</dbReference>
<dbReference type="RefSeq" id="NP_711698.1">
    <property type="nucleotide sequence ID" value="NC_004342.2"/>
</dbReference>
<dbReference type="RefSeq" id="WP_001274793.1">
    <property type="nucleotide sequence ID" value="NC_004342.2"/>
</dbReference>
<dbReference type="SMR" id="Q8F5Z7"/>
<dbReference type="FunCoup" id="Q8F5Z7">
    <property type="interactions" value="198"/>
</dbReference>
<dbReference type="STRING" id="189518.LA_1517"/>
<dbReference type="PaxDb" id="189518-LA_1517"/>
<dbReference type="EnsemblBacteria" id="AAN48716">
    <property type="protein sequence ID" value="AAN48716"/>
    <property type="gene ID" value="LA_1517"/>
</dbReference>
<dbReference type="GeneID" id="61142131"/>
<dbReference type="KEGG" id="lil:LA_1517"/>
<dbReference type="PATRIC" id="fig|189518.3.peg.1516"/>
<dbReference type="HOGENOM" id="CLU_113688_0_2_12"/>
<dbReference type="InParanoid" id="Q8F5Z7"/>
<dbReference type="OrthoDB" id="9799751at2"/>
<dbReference type="PRO" id="PR:Q8F5Z7"/>
<dbReference type="Proteomes" id="UP000001408">
    <property type="component" value="Chromosome I"/>
</dbReference>
<dbReference type="GO" id="GO:0005829">
    <property type="term" value="C:cytosol"/>
    <property type="evidence" value="ECO:0000318"/>
    <property type="project" value="GO_Central"/>
</dbReference>
<dbReference type="GO" id="GO:0003723">
    <property type="term" value="F:RNA binding"/>
    <property type="evidence" value="ECO:0000318"/>
    <property type="project" value="GO_Central"/>
</dbReference>
<dbReference type="GO" id="GO:0006355">
    <property type="term" value="P:regulation of DNA-templated transcription"/>
    <property type="evidence" value="ECO:0007669"/>
    <property type="project" value="InterPro"/>
</dbReference>
<dbReference type="GO" id="GO:0043487">
    <property type="term" value="P:regulation of RNA stability"/>
    <property type="evidence" value="ECO:0000318"/>
    <property type="project" value="GO_Central"/>
</dbReference>
<dbReference type="GO" id="GO:0045974">
    <property type="term" value="P:regulation of translation, ncRNA-mediated"/>
    <property type="evidence" value="ECO:0000318"/>
    <property type="project" value="GO_Central"/>
</dbReference>
<dbReference type="CDD" id="cd01716">
    <property type="entry name" value="Hfq"/>
    <property type="match status" value="1"/>
</dbReference>
<dbReference type="FunFam" id="2.30.30.100:FF:000046">
    <property type="entry name" value="RNA-binding protein Hfq"/>
    <property type="match status" value="1"/>
</dbReference>
<dbReference type="Gene3D" id="2.30.30.100">
    <property type="match status" value="1"/>
</dbReference>
<dbReference type="HAMAP" id="MF_00436">
    <property type="entry name" value="Hfq"/>
    <property type="match status" value="1"/>
</dbReference>
<dbReference type="InterPro" id="IPR005001">
    <property type="entry name" value="Hfq"/>
</dbReference>
<dbReference type="InterPro" id="IPR010920">
    <property type="entry name" value="LSM_dom_sf"/>
</dbReference>
<dbReference type="InterPro" id="IPR047575">
    <property type="entry name" value="Sm"/>
</dbReference>
<dbReference type="NCBIfam" id="TIGR02383">
    <property type="entry name" value="Hfq"/>
    <property type="match status" value="1"/>
</dbReference>
<dbReference type="NCBIfam" id="NF001602">
    <property type="entry name" value="PRK00395.1"/>
    <property type="match status" value="1"/>
</dbReference>
<dbReference type="PANTHER" id="PTHR34772">
    <property type="entry name" value="RNA-BINDING PROTEIN HFQ"/>
    <property type="match status" value="1"/>
</dbReference>
<dbReference type="PANTHER" id="PTHR34772:SF1">
    <property type="entry name" value="RNA-BINDING PROTEIN HFQ"/>
    <property type="match status" value="1"/>
</dbReference>
<dbReference type="Pfam" id="PF17209">
    <property type="entry name" value="Hfq"/>
    <property type="match status" value="1"/>
</dbReference>
<dbReference type="SUPFAM" id="SSF50182">
    <property type="entry name" value="Sm-like ribonucleoproteins"/>
    <property type="match status" value="1"/>
</dbReference>
<dbReference type="PROSITE" id="PS52002">
    <property type="entry name" value="SM"/>
    <property type="match status" value="1"/>
</dbReference>
<reference key="1">
    <citation type="journal article" date="2003" name="Nature">
        <title>Unique physiological and pathogenic features of Leptospira interrogans revealed by whole-genome sequencing.</title>
        <authorList>
            <person name="Ren S.-X."/>
            <person name="Fu G."/>
            <person name="Jiang X.-G."/>
            <person name="Zeng R."/>
            <person name="Miao Y.-G."/>
            <person name="Xu H."/>
            <person name="Zhang Y.-X."/>
            <person name="Xiong H."/>
            <person name="Lu G."/>
            <person name="Lu L.-F."/>
            <person name="Jiang H.-Q."/>
            <person name="Jia J."/>
            <person name="Tu Y.-F."/>
            <person name="Jiang J.-X."/>
            <person name="Gu W.-Y."/>
            <person name="Zhang Y.-Q."/>
            <person name="Cai Z."/>
            <person name="Sheng H.-H."/>
            <person name="Yin H.-F."/>
            <person name="Zhang Y."/>
            <person name="Zhu G.-F."/>
            <person name="Wan M."/>
            <person name="Huang H.-L."/>
            <person name="Qian Z."/>
            <person name="Wang S.-Y."/>
            <person name="Ma W."/>
            <person name="Yao Z.-J."/>
            <person name="Shen Y."/>
            <person name="Qiang B.-Q."/>
            <person name="Xia Q.-C."/>
            <person name="Guo X.-K."/>
            <person name="Danchin A."/>
            <person name="Saint Girons I."/>
            <person name="Somerville R.L."/>
            <person name="Wen Y.-M."/>
            <person name="Shi M.-H."/>
            <person name="Chen Z."/>
            <person name="Xu J.-G."/>
            <person name="Zhao G.-P."/>
        </authorList>
    </citation>
    <scope>NUCLEOTIDE SEQUENCE [LARGE SCALE GENOMIC DNA]</scope>
    <source>
        <strain>56601</strain>
    </source>
</reference>
<feature type="chain" id="PRO_0000095648" description="RNA-binding protein Hfq">
    <location>
        <begin position="1"/>
        <end position="85"/>
    </location>
</feature>
<feature type="domain" description="Sm" evidence="2">
    <location>
        <begin position="9"/>
        <end position="69"/>
    </location>
</feature>
<name>HFQ_LEPIN</name>
<keyword id="KW-1185">Reference proteome</keyword>
<keyword id="KW-0694">RNA-binding</keyword>
<keyword id="KW-0346">Stress response</keyword>
<comment type="function">
    <text evidence="1">RNA chaperone that binds small regulatory RNA (sRNAs) and mRNAs to facilitate mRNA translational regulation in response to envelope stress, environmental stress and changes in metabolite concentrations. Also binds with high specificity to tRNAs.</text>
</comment>
<comment type="subunit">
    <text evidence="1">Homohexamer.</text>
</comment>
<comment type="similarity">
    <text evidence="1">Belongs to the Hfq family.</text>
</comment>
<evidence type="ECO:0000255" key="1">
    <source>
        <dbReference type="HAMAP-Rule" id="MF_00436"/>
    </source>
</evidence>
<evidence type="ECO:0000255" key="2">
    <source>
        <dbReference type="PROSITE-ProRule" id="PRU01346"/>
    </source>
</evidence>
<protein>
    <recommendedName>
        <fullName evidence="1">RNA-binding protein Hfq</fullName>
    </recommendedName>
</protein>
<proteinExistence type="inferred from homology"/>
<sequence>MSAKNNIQDQLLNTARKDKLDLTIYLLNGVPLKGKVVSFDNFTIVLEQENKQSLVYKHAISTIIPAKIIKLYTEEAKDNKDAAQG</sequence>
<organism>
    <name type="scientific">Leptospira interrogans serogroup Icterohaemorrhagiae serovar Lai (strain 56601)</name>
    <dbReference type="NCBI Taxonomy" id="189518"/>
    <lineage>
        <taxon>Bacteria</taxon>
        <taxon>Pseudomonadati</taxon>
        <taxon>Spirochaetota</taxon>
        <taxon>Spirochaetia</taxon>
        <taxon>Leptospirales</taxon>
        <taxon>Leptospiraceae</taxon>
        <taxon>Leptospira</taxon>
    </lineage>
</organism>
<accession>Q8F5Z7</accession>
<gene>
    <name evidence="1" type="primary">hfq</name>
    <name type="ordered locus">LA_1517</name>
</gene>